<gene>
    <name type="primary">TET13</name>
    <name type="ordered locus">At2g03840</name>
    <name type="ORF">T18C20.4</name>
</gene>
<evidence type="ECO:0000250" key="1"/>
<evidence type="ECO:0000255" key="2"/>
<evidence type="ECO:0000305" key="3"/>
<keyword id="KW-0325">Glycoprotein</keyword>
<keyword id="KW-0472">Membrane</keyword>
<keyword id="KW-1185">Reference proteome</keyword>
<keyword id="KW-0812">Transmembrane</keyword>
<keyword id="KW-1133">Transmembrane helix</keyword>
<sequence length="278" mass="32607">MARDKEDQNNENPSIVQNMSFPFNTIFLISSAIFLVTAAFWFVAVMTLHYRTDECNRFVTTPGIFISFSLLAMSLTGFYAAYFKSDCLFRIHFFIFFLWMFVVVSKAIFVIFLHKETNPRLFPGTKIYEFRYEDYSGWVSRLVIKDDEWYRTRRCLVKDNVCNRLNHKMPASEFYQMNLTPIQSGCCKPPLSCGLNYEKPNNWTVSRYYNNLEVDCKRWNNSADTLCFDCDSCKAVIIADVHNTSFSITVNIIHIIFSLCIGMTGWFAWLRILRESQK</sequence>
<organism>
    <name type="scientific">Arabidopsis thaliana</name>
    <name type="common">Mouse-ear cress</name>
    <dbReference type="NCBI Taxonomy" id="3702"/>
    <lineage>
        <taxon>Eukaryota</taxon>
        <taxon>Viridiplantae</taxon>
        <taxon>Streptophyta</taxon>
        <taxon>Embryophyta</taxon>
        <taxon>Tracheophyta</taxon>
        <taxon>Spermatophyta</taxon>
        <taxon>Magnoliopsida</taxon>
        <taxon>eudicotyledons</taxon>
        <taxon>Gunneridae</taxon>
        <taxon>Pentapetalae</taxon>
        <taxon>rosids</taxon>
        <taxon>malvids</taxon>
        <taxon>Brassicales</taxon>
        <taxon>Brassicaceae</taxon>
        <taxon>Camelineae</taxon>
        <taxon>Arabidopsis</taxon>
    </lineage>
</organism>
<reference key="1">
    <citation type="journal article" date="1999" name="Nature">
        <title>Sequence and analysis of chromosome 2 of the plant Arabidopsis thaliana.</title>
        <authorList>
            <person name="Lin X."/>
            <person name="Kaul S."/>
            <person name="Rounsley S.D."/>
            <person name="Shea T.P."/>
            <person name="Benito M.-I."/>
            <person name="Town C.D."/>
            <person name="Fujii C.Y."/>
            <person name="Mason T.M."/>
            <person name="Bowman C.L."/>
            <person name="Barnstead M.E."/>
            <person name="Feldblyum T.V."/>
            <person name="Buell C.R."/>
            <person name="Ketchum K.A."/>
            <person name="Lee J.J."/>
            <person name="Ronning C.M."/>
            <person name="Koo H.L."/>
            <person name="Moffat K.S."/>
            <person name="Cronin L.A."/>
            <person name="Shen M."/>
            <person name="Pai G."/>
            <person name="Van Aken S."/>
            <person name="Umayam L."/>
            <person name="Tallon L.J."/>
            <person name="Gill J.E."/>
            <person name="Adams M.D."/>
            <person name="Carrera A.J."/>
            <person name="Creasy T.H."/>
            <person name="Goodman H.M."/>
            <person name="Somerville C.R."/>
            <person name="Copenhaver G.P."/>
            <person name="Preuss D."/>
            <person name="Nierman W.C."/>
            <person name="White O."/>
            <person name="Eisen J.A."/>
            <person name="Salzberg S.L."/>
            <person name="Fraser C.M."/>
            <person name="Venter J.C."/>
        </authorList>
    </citation>
    <scope>NUCLEOTIDE SEQUENCE [LARGE SCALE GENOMIC DNA]</scope>
    <source>
        <strain>cv. Columbia</strain>
    </source>
</reference>
<reference key="2">
    <citation type="journal article" date="2017" name="Plant J.">
        <title>Araport11: a complete reannotation of the Arabidopsis thaliana reference genome.</title>
        <authorList>
            <person name="Cheng C.Y."/>
            <person name="Krishnakumar V."/>
            <person name="Chan A.P."/>
            <person name="Thibaud-Nissen F."/>
            <person name="Schobel S."/>
            <person name="Town C.D."/>
        </authorList>
    </citation>
    <scope>GENOME REANNOTATION</scope>
    <source>
        <strain>cv. Columbia</strain>
    </source>
</reference>
<protein>
    <recommendedName>
        <fullName>Tetraspanin-13</fullName>
    </recommendedName>
</protein>
<feature type="chain" id="PRO_0000421053" description="Tetraspanin-13">
    <location>
        <begin position="1"/>
        <end position="278"/>
    </location>
</feature>
<feature type="topological domain" description="Cytoplasmic" evidence="2">
    <location>
        <begin position="1"/>
        <end position="25"/>
    </location>
</feature>
<feature type="transmembrane region" description="Helical" evidence="2">
    <location>
        <begin position="26"/>
        <end position="46"/>
    </location>
</feature>
<feature type="topological domain" description="Extracellular" evidence="2">
    <location>
        <begin position="47"/>
        <end position="62"/>
    </location>
</feature>
<feature type="transmembrane region" description="Helical" evidence="2">
    <location>
        <begin position="63"/>
        <end position="83"/>
    </location>
</feature>
<feature type="topological domain" description="Cytoplasmic" evidence="2">
    <location>
        <begin position="84"/>
        <end position="92"/>
    </location>
</feature>
<feature type="transmembrane region" description="Helical" evidence="2">
    <location>
        <begin position="93"/>
        <end position="113"/>
    </location>
</feature>
<feature type="topological domain" description="Extracellular" evidence="2">
    <location>
        <begin position="114"/>
        <end position="249"/>
    </location>
</feature>
<feature type="transmembrane region" description="Helical" evidence="2">
    <location>
        <begin position="250"/>
        <end position="270"/>
    </location>
</feature>
<feature type="topological domain" description="Cytoplasmic" evidence="2">
    <location>
        <begin position="271"/>
        <end position="278"/>
    </location>
</feature>
<feature type="glycosylation site" description="N-linked (GlcNAc...) asparagine" evidence="2">
    <location>
        <position position="202"/>
    </location>
</feature>
<feature type="glycosylation site" description="N-linked (GlcNAc...) asparagine" evidence="2">
    <location>
        <position position="220"/>
    </location>
</feature>
<feature type="glycosylation site" description="N-linked (GlcNAc...) asparagine" evidence="2">
    <location>
        <position position="243"/>
    </location>
</feature>
<comment type="function">
    <text evidence="1">May be involved in the regulation of cell differentiation.</text>
</comment>
<comment type="subcellular location">
    <subcellularLocation>
        <location evidence="1">Membrane</location>
        <topology evidence="3">Multi-pass membrane protein</topology>
    </subcellularLocation>
</comment>
<comment type="similarity">
    <text evidence="3">Belongs to the tetraspanin (TM4SF) family.</text>
</comment>
<accession>Q9SI56</accession>
<name>TET13_ARATH</name>
<proteinExistence type="inferred from homology"/>
<dbReference type="EMBL" id="AC007196">
    <property type="protein sequence ID" value="AAD24818.1"/>
    <property type="molecule type" value="Genomic_DNA"/>
</dbReference>
<dbReference type="EMBL" id="CP002685">
    <property type="protein sequence ID" value="AEC05758.1"/>
    <property type="molecule type" value="Genomic_DNA"/>
</dbReference>
<dbReference type="PIR" id="H84452">
    <property type="entry name" value="H84452"/>
</dbReference>
<dbReference type="RefSeq" id="NP_178478.1">
    <property type="nucleotide sequence ID" value="NM_126430.2"/>
</dbReference>
<dbReference type="FunCoup" id="Q9SI56">
    <property type="interactions" value="87"/>
</dbReference>
<dbReference type="STRING" id="3702.Q9SI56"/>
<dbReference type="GlyCosmos" id="Q9SI56">
    <property type="glycosylation" value="3 sites, No reported glycans"/>
</dbReference>
<dbReference type="GlyGen" id="Q9SI56">
    <property type="glycosylation" value="3 sites"/>
</dbReference>
<dbReference type="PaxDb" id="3702-AT2G03840.1"/>
<dbReference type="ProteomicsDB" id="232699"/>
<dbReference type="EnsemblPlants" id="AT2G03840.1">
    <property type="protein sequence ID" value="AT2G03840.1"/>
    <property type="gene ID" value="AT2G03840"/>
</dbReference>
<dbReference type="GeneID" id="814910"/>
<dbReference type="Gramene" id="AT2G03840.1">
    <property type="protein sequence ID" value="AT2G03840.1"/>
    <property type="gene ID" value="AT2G03840"/>
</dbReference>
<dbReference type="KEGG" id="ath:AT2G03840"/>
<dbReference type="Araport" id="AT2G03840"/>
<dbReference type="TAIR" id="AT2G03840">
    <property type="gene designation" value="TET13"/>
</dbReference>
<dbReference type="eggNOG" id="ENOG502QQQH">
    <property type="taxonomic scope" value="Eukaryota"/>
</dbReference>
<dbReference type="HOGENOM" id="CLU_066970_0_0_1"/>
<dbReference type="InParanoid" id="Q9SI56"/>
<dbReference type="OMA" id="SCKAVII"/>
<dbReference type="PhylomeDB" id="Q9SI56"/>
<dbReference type="PRO" id="PR:Q9SI56"/>
<dbReference type="Proteomes" id="UP000006548">
    <property type="component" value="Chromosome 2"/>
</dbReference>
<dbReference type="ExpressionAtlas" id="Q9SI56">
    <property type="expression patterns" value="baseline and differential"/>
</dbReference>
<dbReference type="GO" id="GO:0016020">
    <property type="term" value="C:membrane"/>
    <property type="evidence" value="ECO:0007669"/>
    <property type="project" value="UniProtKB-SubCell"/>
</dbReference>
<dbReference type="GO" id="GO:0009734">
    <property type="term" value="P:auxin-activated signaling pathway"/>
    <property type="evidence" value="ECO:0007669"/>
    <property type="project" value="InterPro"/>
</dbReference>
<dbReference type="GO" id="GO:0048527">
    <property type="term" value="P:lateral root development"/>
    <property type="evidence" value="ECO:0000315"/>
    <property type="project" value="TAIR"/>
</dbReference>
<dbReference type="GO" id="GO:0080022">
    <property type="term" value="P:primary root development"/>
    <property type="evidence" value="ECO:0000315"/>
    <property type="project" value="TAIR"/>
</dbReference>
<dbReference type="InterPro" id="IPR044991">
    <property type="entry name" value="TET_plant"/>
</dbReference>
<dbReference type="InterPro" id="IPR018499">
    <property type="entry name" value="Tetraspanin/Peripherin"/>
</dbReference>
<dbReference type="PANTHER" id="PTHR32191">
    <property type="entry name" value="TETRASPANIN-8-RELATED"/>
    <property type="match status" value="1"/>
</dbReference>
<dbReference type="Pfam" id="PF00335">
    <property type="entry name" value="Tetraspanin"/>
    <property type="match status" value="1"/>
</dbReference>